<proteinExistence type="inferred from homology"/>
<sequence length="133" mass="14775">MANTDPISDMLTRIRNACEKRHQTTNIPLSRMNRSIAKVLEQEGFIDQFSEAGEGVQKHLVLSLKYSGKQKVPTIRSVQRVSKPGLRIYTNRRDLPKVLGGLGVAIISTSKGVMSDRDARKEGVGGEVLCYVY</sequence>
<evidence type="ECO:0000255" key="1">
    <source>
        <dbReference type="HAMAP-Rule" id="MF_01302"/>
    </source>
</evidence>
<evidence type="ECO:0000305" key="2"/>
<accession>A5GVX3</accession>
<dbReference type="EMBL" id="CT978603">
    <property type="protein sequence ID" value="CAK29032.1"/>
    <property type="molecule type" value="Genomic_DNA"/>
</dbReference>
<dbReference type="SMR" id="A5GVX3"/>
<dbReference type="STRING" id="316278.SynRCC307_2129"/>
<dbReference type="KEGG" id="syr:SynRCC307_2129"/>
<dbReference type="eggNOG" id="COG0096">
    <property type="taxonomic scope" value="Bacteria"/>
</dbReference>
<dbReference type="HOGENOM" id="CLU_098428_0_2_3"/>
<dbReference type="OrthoDB" id="9802617at2"/>
<dbReference type="Proteomes" id="UP000001115">
    <property type="component" value="Chromosome"/>
</dbReference>
<dbReference type="GO" id="GO:1990904">
    <property type="term" value="C:ribonucleoprotein complex"/>
    <property type="evidence" value="ECO:0007669"/>
    <property type="project" value="UniProtKB-KW"/>
</dbReference>
<dbReference type="GO" id="GO:0005840">
    <property type="term" value="C:ribosome"/>
    <property type="evidence" value="ECO:0007669"/>
    <property type="project" value="UniProtKB-KW"/>
</dbReference>
<dbReference type="GO" id="GO:0019843">
    <property type="term" value="F:rRNA binding"/>
    <property type="evidence" value="ECO:0007669"/>
    <property type="project" value="UniProtKB-UniRule"/>
</dbReference>
<dbReference type="GO" id="GO:0003735">
    <property type="term" value="F:structural constituent of ribosome"/>
    <property type="evidence" value="ECO:0007669"/>
    <property type="project" value="InterPro"/>
</dbReference>
<dbReference type="GO" id="GO:0006412">
    <property type="term" value="P:translation"/>
    <property type="evidence" value="ECO:0007669"/>
    <property type="project" value="UniProtKB-UniRule"/>
</dbReference>
<dbReference type="FunFam" id="3.30.1370.30:FF:000002">
    <property type="entry name" value="30S ribosomal protein S8"/>
    <property type="match status" value="1"/>
</dbReference>
<dbReference type="FunFam" id="3.30.1490.10:FF:000001">
    <property type="entry name" value="30S ribosomal protein S8"/>
    <property type="match status" value="1"/>
</dbReference>
<dbReference type="Gene3D" id="3.30.1370.30">
    <property type="match status" value="1"/>
</dbReference>
<dbReference type="Gene3D" id="3.30.1490.10">
    <property type="match status" value="1"/>
</dbReference>
<dbReference type="HAMAP" id="MF_01302_B">
    <property type="entry name" value="Ribosomal_uS8_B"/>
    <property type="match status" value="1"/>
</dbReference>
<dbReference type="InterPro" id="IPR000630">
    <property type="entry name" value="Ribosomal_uS8"/>
</dbReference>
<dbReference type="InterPro" id="IPR047863">
    <property type="entry name" value="Ribosomal_uS8_CS"/>
</dbReference>
<dbReference type="InterPro" id="IPR035987">
    <property type="entry name" value="Ribosomal_uS8_sf"/>
</dbReference>
<dbReference type="NCBIfam" id="NF001109">
    <property type="entry name" value="PRK00136.1"/>
    <property type="match status" value="1"/>
</dbReference>
<dbReference type="PANTHER" id="PTHR11758">
    <property type="entry name" value="40S RIBOSOMAL PROTEIN S15A"/>
    <property type="match status" value="1"/>
</dbReference>
<dbReference type="Pfam" id="PF00410">
    <property type="entry name" value="Ribosomal_S8"/>
    <property type="match status" value="1"/>
</dbReference>
<dbReference type="SUPFAM" id="SSF56047">
    <property type="entry name" value="Ribosomal protein S8"/>
    <property type="match status" value="1"/>
</dbReference>
<dbReference type="PROSITE" id="PS00053">
    <property type="entry name" value="RIBOSOMAL_S8"/>
    <property type="match status" value="1"/>
</dbReference>
<keyword id="KW-1185">Reference proteome</keyword>
<keyword id="KW-0687">Ribonucleoprotein</keyword>
<keyword id="KW-0689">Ribosomal protein</keyword>
<keyword id="KW-0694">RNA-binding</keyword>
<keyword id="KW-0699">rRNA-binding</keyword>
<organism>
    <name type="scientific">Synechococcus sp. (strain RCC307)</name>
    <dbReference type="NCBI Taxonomy" id="316278"/>
    <lineage>
        <taxon>Bacteria</taxon>
        <taxon>Bacillati</taxon>
        <taxon>Cyanobacteriota</taxon>
        <taxon>Cyanophyceae</taxon>
        <taxon>Synechococcales</taxon>
        <taxon>Synechococcaceae</taxon>
        <taxon>Synechococcus</taxon>
    </lineage>
</organism>
<comment type="function">
    <text evidence="1">One of the primary rRNA binding proteins, it binds directly to 16S rRNA central domain where it helps coordinate assembly of the platform of the 30S subunit.</text>
</comment>
<comment type="subunit">
    <text evidence="1">Part of the 30S ribosomal subunit. Contacts proteins S5 and S12.</text>
</comment>
<comment type="similarity">
    <text evidence="1">Belongs to the universal ribosomal protein uS8 family.</text>
</comment>
<name>RS8_SYNR3</name>
<gene>
    <name evidence="1" type="primary">rpsH</name>
    <name evidence="1" type="synonym">rps8</name>
    <name type="ordered locus">SynRCC307_2129</name>
</gene>
<feature type="chain" id="PRO_0000305759" description="Small ribosomal subunit protein uS8">
    <location>
        <begin position="1"/>
        <end position="133"/>
    </location>
</feature>
<protein>
    <recommendedName>
        <fullName evidence="1">Small ribosomal subunit protein uS8</fullName>
    </recommendedName>
    <alternativeName>
        <fullName evidence="2">30S ribosomal protein S8</fullName>
    </alternativeName>
</protein>
<reference key="1">
    <citation type="submission" date="2006-05" db="EMBL/GenBank/DDBJ databases">
        <authorList>
            <consortium name="Genoscope"/>
        </authorList>
    </citation>
    <scope>NUCLEOTIDE SEQUENCE [LARGE SCALE GENOMIC DNA]</scope>
    <source>
        <strain>RCC307</strain>
    </source>
</reference>